<evidence type="ECO:0000255" key="1">
    <source>
        <dbReference type="HAMAP-Rule" id="MF_00621"/>
    </source>
</evidence>
<comment type="function">
    <text evidence="1">DNA-binding global transcriptional regulator which is involved in the adaptive response to starvation and acts by directly or indirectly controlling the expression of numerous genes in response to nutrient availability. During rapid exponential growth, CodY is highly active and represses genes whose products allow adaptation to nutrient depletion.</text>
</comment>
<comment type="subcellular location">
    <subcellularLocation>
        <location evidence="1">Cytoplasm</location>
    </subcellularLocation>
</comment>
<comment type="similarity">
    <text evidence="1">Belongs to the CodY family.</text>
</comment>
<gene>
    <name evidence="1" type="primary">codY</name>
    <name type="ordered locus">SSP1513</name>
</gene>
<dbReference type="EMBL" id="AP008934">
    <property type="protein sequence ID" value="BAE18658.1"/>
    <property type="molecule type" value="Genomic_DNA"/>
</dbReference>
<dbReference type="RefSeq" id="WP_011303263.1">
    <property type="nucleotide sequence ID" value="NZ_MTGA01000034.1"/>
</dbReference>
<dbReference type="SMR" id="Q49X40"/>
<dbReference type="GeneID" id="3617255"/>
<dbReference type="KEGG" id="ssp:SSP1513"/>
<dbReference type="PATRIC" id="fig|342451.11.peg.1515"/>
<dbReference type="eggNOG" id="COG4465">
    <property type="taxonomic scope" value="Bacteria"/>
</dbReference>
<dbReference type="HOGENOM" id="CLU_089581_0_0_9"/>
<dbReference type="OrthoDB" id="2056at2"/>
<dbReference type="Proteomes" id="UP000006371">
    <property type="component" value="Chromosome"/>
</dbReference>
<dbReference type="GO" id="GO:0005737">
    <property type="term" value="C:cytoplasm"/>
    <property type="evidence" value="ECO:0007669"/>
    <property type="project" value="UniProtKB-SubCell"/>
</dbReference>
<dbReference type="GO" id="GO:0003677">
    <property type="term" value="F:DNA binding"/>
    <property type="evidence" value="ECO:0007669"/>
    <property type="project" value="UniProtKB-UniRule"/>
</dbReference>
<dbReference type="GO" id="GO:0003700">
    <property type="term" value="F:DNA-binding transcription factor activity"/>
    <property type="evidence" value="ECO:0007669"/>
    <property type="project" value="InterPro"/>
</dbReference>
<dbReference type="GO" id="GO:0005525">
    <property type="term" value="F:GTP binding"/>
    <property type="evidence" value="ECO:0007669"/>
    <property type="project" value="InterPro"/>
</dbReference>
<dbReference type="GO" id="GO:0045892">
    <property type="term" value="P:negative regulation of DNA-templated transcription"/>
    <property type="evidence" value="ECO:0007669"/>
    <property type="project" value="UniProtKB-UniRule"/>
</dbReference>
<dbReference type="FunFam" id="1.10.10.10:FF:000034">
    <property type="entry name" value="GTP-sensing transcriptional pleiotropic repressor CodY"/>
    <property type="match status" value="1"/>
</dbReference>
<dbReference type="FunFam" id="3.30.450.40:FF:000003">
    <property type="entry name" value="GTP-sensing transcriptional pleiotropic repressor CodY"/>
    <property type="match status" value="1"/>
</dbReference>
<dbReference type="Gene3D" id="3.30.450.40">
    <property type="match status" value="1"/>
</dbReference>
<dbReference type="Gene3D" id="1.10.10.10">
    <property type="entry name" value="Winged helix-like DNA-binding domain superfamily/Winged helix DNA-binding domain"/>
    <property type="match status" value="1"/>
</dbReference>
<dbReference type="HAMAP" id="MF_00621">
    <property type="entry name" value="HTH_type_CodY"/>
    <property type="match status" value="1"/>
</dbReference>
<dbReference type="InterPro" id="IPR014154">
    <property type="entry name" value="CodY"/>
</dbReference>
<dbReference type="InterPro" id="IPR029016">
    <property type="entry name" value="GAF-like_dom_sf"/>
</dbReference>
<dbReference type="InterPro" id="IPR013198">
    <property type="entry name" value="GTP_trans_reg_CodY_C"/>
</dbReference>
<dbReference type="InterPro" id="IPR010312">
    <property type="entry name" value="Transc_reg_CodY_N"/>
</dbReference>
<dbReference type="InterPro" id="IPR036388">
    <property type="entry name" value="WH-like_DNA-bd_sf"/>
</dbReference>
<dbReference type="InterPro" id="IPR036390">
    <property type="entry name" value="WH_DNA-bd_sf"/>
</dbReference>
<dbReference type="NCBIfam" id="TIGR02787">
    <property type="entry name" value="codY_Gpos"/>
    <property type="match status" value="1"/>
</dbReference>
<dbReference type="NCBIfam" id="NF003170">
    <property type="entry name" value="PRK04158.1"/>
    <property type="match status" value="1"/>
</dbReference>
<dbReference type="PANTHER" id="PTHR40062:SF1">
    <property type="entry name" value="GLOBAL TRANSCRIPTIONAL REGULATOR CODY"/>
    <property type="match status" value="1"/>
</dbReference>
<dbReference type="PANTHER" id="PTHR40062">
    <property type="entry name" value="GTP-SENSING TRANSCRIPTIONAL PLEIOTROPIC REPRESSOR CODY"/>
    <property type="match status" value="1"/>
</dbReference>
<dbReference type="Pfam" id="PF06018">
    <property type="entry name" value="CodY"/>
    <property type="match status" value="1"/>
</dbReference>
<dbReference type="Pfam" id="PF08222">
    <property type="entry name" value="HTH_CodY"/>
    <property type="match status" value="1"/>
</dbReference>
<dbReference type="PIRSF" id="PIRSF011572">
    <property type="entry name" value="GTP_sensing_CodY"/>
    <property type="match status" value="1"/>
</dbReference>
<dbReference type="SUPFAM" id="SSF46785">
    <property type="entry name" value="Winged helix' DNA-binding domain"/>
    <property type="match status" value="1"/>
</dbReference>
<reference key="1">
    <citation type="journal article" date="2005" name="Proc. Natl. Acad. Sci. U.S.A.">
        <title>Whole genome sequence of Staphylococcus saprophyticus reveals the pathogenesis of uncomplicated urinary tract infection.</title>
        <authorList>
            <person name="Kuroda M."/>
            <person name="Yamashita A."/>
            <person name="Hirakawa H."/>
            <person name="Kumano M."/>
            <person name="Morikawa K."/>
            <person name="Higashide M."/>
            <person name="Maruyama A."/>
            <person name="Inose Y."/>
            <person name="Matoba K."/>
            <person name="Toh H."/>
            <person name="Kuhara S."/>
            <person name="Hattori M."/>
            <person name="Ohta T."/>
        </authorList>
    </citation>
    <scope>NUCLEOTIDE SEQUENCE [LARGE SCALE GENOMIC DNA]</scope>
    <source>
        <strain>ATCC 15305 / DSM 20229 / NCIMB 8711 / NCTC 7292 / S-41</strain>
    </source>
</reference>
<name>CODY_STAS1</name>
<proteinExistence type="inferred from homology"/>
<keyword id="KW-0963">Cytoplasm</keyword>
<keyword id="KW-0238">DNA-binding</keyword>
<keyword id="KW-1185">Reference proteome</keyword>
<keyword id="KW-0678">Repressor</keyword>
<keyword id="KW-0804">Transcription</keyword>
<keyword id="KW-0805">Transcription regulation</keyword>
<feature type="chain" id="PRO_1000051546" description="Global transcriptional regulator CodY">
    <location>
        <begin position="1"/>
        <end position="257"/>
    </location>
</feature>
<feature type="DNA-binding region" description="H-T-H motif" evidence="1">
    <location>
        <begin position="203"/>
        <end position="222"/>
    </location>
</feature>
<feature type="region of interest" description="GAF domain" evidence="1">
    <location>
        <begin position="1"/>
        <end position="155"/>
    </location>
</feature>
<sequence>MSLLSKTRELNTLLQKHKGIAVDFKDVAQTISSVTVTNVFIVSRKGKILGSNLNELLKNERIIQMLENRHIPVEYTDQLMDVKETQSNIGIDNVLTVFPPENNDLFGDSRTTIFPILGGGERLGTLVLGRVTEDFSENDLVLGEYAATVIGMEILREKHNEVEQEARDKAAISMAINSLSYSESEAIEHIFEELGGKEGLLIASKVADRVGITRSVIVNALRKLESAGVIESRSLGMKGTFIKVKKDKFLDELERIK</sequence>
<protein>
    <recommendedName>
        <fullName evidence="1">Global transcriptional regulator CodY</fullName>
    </recommendedName>
</protein>
<accession>Q49X40</accession>
<organism>
    <name type="scientific">Staphylococcus saprophyticus subsp. saprophyticus (strain ATCC 15305 / DSM 20229 / NCIMB 8711 / NCTC 7292 / S-41)</name>
    <dbReference type="NCBI Taxonomy" id="342451"/>
    <lineage>
        <taxon>Bacteria</taxon>
        <taxon>Bacillati</taxon>
        <taxon>Bacillota</taxon>
        <taxon>Bacilli</taxon>
        <taxon>Bacillales</taxon>
        <taxon>Staphylococcaceae</taxon>
        <taxon>Staphylococcus</taxon>
    </lineage>
</organism>